<reference key="1">
    <citation type="journal article" date="2005" name="DNA Res.">
        <title>Complete genome sequence of the facultative anaerobic magnetotactic bacterium Magnetospirillum sp. strain AMB-1.</title>
        <authorList>
            <person name="Matsunaga T."/>
            <person name="Okamura Y."/>
            <person name="Fukuda Y."/>
            <person name="Wahyudi A.T."/>
            <person name="Murase Y."/>
            <person name="Takeyama H."/>
        </authorList>
    </citation>
    <scope>NUCLEOTIDE SEQUENCE [LARGE SCALE GENOMIC DNA]</scope>
    <source>
        <strain>ATCC 700264 / AMB-1</strain>
    </source>
</reference>
<gene>
    <name evidence="1" type="primary">leuS</name>
    <name type="ordered locus">amb0027</name>
</gene>
<evidence type="ECO:0000255" key="1">
    <source>
        <dbReference type="HAMAP-Rule" id="MF_00049"/>
    </source>
</evidence>
<protein>
    <recommendedName>
        <fullName evidence="1">Leucine--tRNA ligase</fullName>
        <ecNumber evidence="1">6.1.1.4</ecNumber>
    </recommendedName>
    <alternativeName>
        <fullName evidence="1">Leucyl-tRNA synthetase</fullName>
        <shortName evidence="1">LeuRS</shortName>
    </alternativeName>
</protein>
<proteinExistence type="inferred from homology"/>
<feature type="chain" id="PRO_0000334769" description="Leucine--tRNA ligase">
    <location>
        <begin position="1"/>
        <end position="862"/>
    </location>
</feature>
<feature type="short sequence motif" description="'HIGH' region">
    <location>
        <begin position="49"/>
        <end position="59"/>
    </location>
</feature>
<feature type="short sequence motif" description="'KMSKS' region">
    <location>
        <begin position="625"/>
        <end position="629"/>
    </location>
</feature>
<feature type="binding site" evidence="1">
    <location>
        <position position="628"/>
    </location>
    <ligand>
        <name>ATP</name>
        <dbReference type="ChEBI" id="CHEBI:30616"/>
    </ligand>
</feature>
<keyword id="KW-0030">Aminoacyl-tRNA synthetase</keyword>
<keyword id="KW-0067">ATP-binding</keyword>
<keyword id="KW-0963">Cytoplasm</keyword>
<keyword id="KW-0436">Ligase</keyword>
<keyword id="KW-0547">Nucleotide-binding</keyword>
<keyword id="KW-0648">Protein biosynthesis</keyword>
<sequence>MSRPDGISGDRYNVKETEARWQQAWEAKRCFEAEIAPGKPKYYVLEMFPYPSGRIHMGHVRNYTLGDVVARYKRAKGFNVLHPMGWDAFGLPAENAAIQNNVHPAKWTRENIAAMREQLKSMGLSYDWRREVATCEPEYYRHEQKMFLDFLKAGLVYRKESWVNWDPVENTVLANEQVIDGRGWRSGALVEKRLLSQWFLKITAYAQDLLDSLATLERWPERVRLMQENWIGRSEGARLMFDLDGRSDRLEIFTTRPDTLFGAKFVAIAANHPLAAELAAGNPALAEFVAECNRMGTSEAAIETAEKKGFDTGLRAVHPFDSTWTLPIYVANFVLMDYGSGAIFGCPAHDQRDLDFANKYGLGWTQVVEPASDGQAVLAAIAKGEAYTGDGVAVNSQFLDGLAVDEAKAEAIRRIEEMGRGERTINYRLRDWGVSRQRYWGCPIPVIHCEACGTVPVPAEQLPVVLPEDVSFDKPGNPLDHHPTWKHVDCPCCGKPARRETDTFDTFFESSWYFARYTSPDRTDVAFDRVAADYWMSVDQYIGGIEHAVLHLLYSRFFTRALKDCGYLNVKEPFAGLLTQGMICHETYKSEDGAWLFPTEVVPGADGKLVHAETGAPVTGGRSEKMSKSKKNVVDPAGIIDGYGADTARLFMLSDSPPERDLDWTEAGIDGAWRYVNRLWRMVATAELPPAGAPMPELSPEAAKIRRLLHKTIAQVGEDLERFHFNKAVARIREMTNGLGELPAGDSGAAWVLREGLEATARLIGPMMPHLAEEMWLALGGSGLLAEAAWPEADPALLVEDSVTVAVQVNGKLRATIELPKDVDAALAEQTALAQPQVISAMSGKPARKVVVVPNRIVNVVV</sequence>
<dbReference type="EC" id="6.1.1.4" evidence="1"/>
<dbReference type="EMBL" id="AP007255">
    <property type="protein sequence ID" value="BAE48831.1"/>
    <property type="molecule type" value="Genomic_DNA"/>
</dbReference>
<dbReference type="RefSeq" id="WP_011382475.1">
    <property type="nucleotide sequence ID" value="NC_007626.1"/>
</dbReference>
<dbReference type="SMR" id="Q2WBE4"/>
<dbReference type="STRING" id="342108.amb0027"/>
<dbReference type="KEGG" id="mag:amb0027"/>
<dbReference type="HOGENOM" id="CLU_004427_0_0_5"/>
<dbReference type="OrthoDB" id="9810365at2"/>
<dbReference type="Proteomes" id="UP000007058">
    <property type="component" value="Chromosome"/>
</dbReference>
<dbReference type="GO" id="GO:0005829">
    <property type="term" value="C:cytosol"/>
    <property type="evidence" value="ECO:0007669"/>
    <property type="project" value="TreeGrafter"/>
</dbReference>
<dbReference type="GO" id="GO:0002161">
    <property type="term" value="F:aminoacyl-tRNA deacylase activity"/>
    <property type="evidence" value="ECO:0007669"/>
    <property type="project" value="InterPro"/>
</dbReference>
<dbReference type="GO" id="GO:0005524">
    <property type="term" value="F:ATP binding"/>
    <property type="evidence" value="ECO:0007669"/>
    <property type="project" value="UniProtKB-UniRule"/>
</dbReference>
<dbReference type="GO" id="GO:0004823">
    <property type="term" value="F:leucine-tRNA ligase activity"/>
    <property type="evidence" value="ECO:0007669"/>
    <property type="project" value="UniProtKB-UniRule"/>
</dbReference>
<dbReference type="GO" id="GO:0006429">
    <property type="term" value="P:leucyl-tRNA aminoacylation"/>
    <property type="evidence" value="ECO:0007669"/>
    <property type="project" value="UniProtKB-UniRule"/>
</dbReference>
<dbReference type="CDD" id="cd07958">
    <property type="entry name" value="Anticodon_Ia_Leu_BEm"/>
    <property type="match status" value="1"/>
</dbReference>
<dbReference type="CDD" id="cd00812">
    <property type="entry name" value="LeuRS_core"/>
    <property type="match status" value="1"/>
</dbReference>
<dbReference type="FunFam" id="1.10.730.10:FF:000002">
    <property type="entry name" value="Leucine--tRNA ligase"/>
    <property type="match status" value="1"/>
</dbReference>
<dbReference type="FunFam" id="3.40.50.620:FF:000003">
    <property type="entry name" value="Leucine--tRNA ligase"/>
    <property type="match status" value="1"/>
</dbReference>
<dbReference type="FunFam" id="3.40.50.620:FF:000056">
    <property type="entry name" value="Leucine--tRNA ligase"/>
    <property type="match status" value="1"/>
</dbReference>
<dbReference type="Gene3D" id="2.20.28.290">
    <property type="match status" value="1"/>
</dbReference>
<dbReference type="Gene3D" id="3.10.20.590">
    <property type="match status" value="1"/>
</dbReference>
<dbReference type="Gene3D" id="3.40.50.620">
    <property type="entry name" value="HUPs"/>
    <property type="match status" value="2"/>
</dbReference>
<dbReference type="Gene3D" id="1.10.730.10">
    <property type="entry name" value="Isoleucyl-tRNA Synthetase, Domain 1"/>
    <property type="match status" value="1"/>
</dbReference>
<dbReference type="HAMAP" id="MF_00049_B">
    <property type="entry name" value="Leu_tRNA_synth_B"/>
    <property type="match status" value="1"/>
</dbReference>
<dbReference type="InterPro" id="IPR001412">
    <property type="entry name" value="aa-tRNA-synth_I_CS"/>
</dbReference>
<dbReference type="InterPro" id="IPR002300">
    <property type="entry name" value="aa-tRNA-synth_Ia"/>
</dbReference>
<dbReference type="InterPro" id="IPR002302">
    <property type="entry name" value="Leu-tRNA-ligase"/>
</dbReference>
<dbReference type="InterPro" id="IPR025709">
    <property type="entry name" value="Leu_tRNA-synth_edit"/>
</dbReference>
<dbReference type="InterPro" id="IPR013155">
    <property type="entry name" value="M/V/L/I-tRNA-synth_anticd-bd"/>
</dbReference>
<dbReference type="InterPro" id="IPR015413">
    <property type="entry name" value="Methionyl/Leucyl_tRNA_Synth"/>
</dbReference>
<dbReference type="InterPro" id="IPR014729">
    <property type="entry name" value="Rossmann-like_a/b/a_fold"/>
</dbReference>
<dbReference type="InterPro" id="IPR009080">
    <property type="entry name" value="tRNAsynth_Ia_anticodon-bd"/>
</dbReference>
<dbReference type="InterPro" id="IPR009008">
    <property type="entry name" value="Val/Leu/Ile-tRNA-synth_edit"/>
</dbReference>
<dbReference type="NCBIfam" id="TIGR00396">
    <property type="entry name" value="leuS_bact"/>
    <property type="match status" value="1"/>
</dbReference>
<dbReference type="PANTHER" id="PTHR43740:SF2">
    <property type="entry name" value="LEUCINE--TRNA LIGASE, MITOCHONDRIAL"/>
    <property type="match status" value="1"/>
</dbReference>
<dbReference type="PANTHER" id="PTHR43740">
    <property type="entry name" value="LEUCYL-TRNA SYNTHETASE"/>
    <property type="match status" value="1"/>
</dbReference>
<dbReference type="Pfam" id="PF08264">
    <property type="entry name" value="Anticodon_1"/>
    <property type="match status" value="1"/>
</dbReference>
<dbReference type="Pfam" id="PF00133">
    <property type="entry name" value="tRNA-synt_1"/>
    <property type="match status" value="2"/>
</dbReference>
<dbReference type="Pfam" id="PF13603">
    <property type="entry name" value="tRNA-synt_1_2"/>
    <property type="match status" value="1"/>
</dbReference>
<dbReference type="Pfam" id="PF09334">
    <property type="entry name" value="tRNA-synt_1g"/>
    <property type="match status" value="1"/>
</dbReference>
<dbReference type="PRINTS" id="PR00985">
    <property type="entry name" value="TRNASYNTHLEU"/>
</dbReference>
<dbReference type="SUPFAM" id="SSF47323">
    <property type="entry name" value="Anticodon-binding domain of a subclass of class I aminoacyl-tRNA synthetases"/>
    <property type="match status" value="1"/>
</dbReference>
<dbReference type="SUPFAM" id="SSF52374">
    <property type="entry name" value="Nucleotidylyl transferase"/>
    <property type="match status" value="1"/>
</dbReference>
<dbReference type="SUPFAM" id="SSF50677">
    <property type="entry name" value="ValRS/IleRS/LeuRS editing domain"/>
    <property type="match status" value="1"/>
</dbReference>
<dbReference type="PROSITE" id="PS00178">
    <property type="entry name" value="AA_TRNA_LIGASE_I"/>
    <property type="match status" value="1"/>
</dbReference>
<accession>Q2WBE4</accession>
<name>SYL_PARM1</name>
<organism>
    <name type="scientific">Paramagnetospirillum magneticum (strain ATCC 700264 / AMB-1)</name>
    <name type="common">Magnetospirillum magneticum</name>
    <dbReference type="NCBI Taxonomy" id="342108"/>
    <lineage>
        <taxon>Bacteria</taxon>
        <taxon>Pseudomonadati</taxon>
        <taxon>Pseudomonadota</taxon>
        <taxon>Alphaproteobacteria</taxon>
        <taxon>Rhodospirillales</taxon>
        <taxon>Magnetospirillaceae</taxon>
        <taxon>Paramagnetospirillum</taxon>
    </lineage>
</organism>
<comment type="catalytic activity">
    <reaction evidence="1">
        <text>tRNA(Leu) + L-leucine + ATP = L-leucyl-tRNA(Leu) + AMP + diphosphate</text>
        <dbReference type="Rhea" id="RHEA:11688"/>
        <dbReference type="Rhea" id="RHEA-COMP:9613"/>
        <dbReference type="Rhea" id="RHEA-COMP:9622"/>
        <dbReference type="ChEBI" id="CHEBI:30616"/>
        <dbReference type="ChEBI" id="CHEBI:33019"/>
        <dbReference type="ChEBI" id="CHEBI:57427"/>
        <dbReference type="ChEBI" id="CHEBI:78442"/>
        <dbReference type="ChEBI" id="CHEBI:78494"/>
        <dbReference type="ChEBI" id="CHEBI:456215"/>
        <dbReference type="EC" id="6.1.1.4"/>
    </reaction>
</comment>
<comment type="subcellular location">
    <subcellularLocation>
        <location evidence="1">Cytoplasm</location>
    </subcellularLocation>
</comment>
<comment type="similarity">
    <text evidence="1">Belongs to the class-I aminoacyl-tRNA synthetase family.</text>
</comment>